<proteinExistence type="evidence at transcript level"/>
<reference key="1">
    <citation type="journal article" date="1998" name="Nature">
        <title>Analysis of 1.9 Mb of contiguous sequence from chromosome 4 of Arabidopsis thaliana.</title>
        <authorList>
            <person name="Bevan M."/>
            <person name="Bancroft I."/>
            <person name="Bent E."/>
            <person name="Love K."/>
            <person name="Goodman H.M."/>
            <person name="Dean C."/>
            <person name="Bergkamp R."/>
            <person name="Dirkse W."/>
            <person name="van Staveren M."/>
            <person name="Stiekema W."/>
            <person name="Drost L."/>
            <person name="Ridley P."/>
            <person name="Hudson S.-A."/>
            <person name="Patel K."/>
            <person name="Murphy G."/>
            <person name="Piffanelli P."/>
            <person name="Wedler H."/>
            <person name="Wedler E."/>
            <person name="Wambutt R."/>
            <person name="Weitzenegger T."/>
            <person name="Pohl T."/>
            <person name="Terryn N."/>
            <person name="Gielen J."/>
            <person name="Villarroel R."/>
            <person name="De Clercq R."/>
            <person name="van Montagu M."/>
            <person name="Lecharny A."/>
            <person name="Aubourg S."/>
            <person name="Gy I."/>
            <person name="Kreis M."/>
            <person name="Lao N."/>
            <person name="Kavanagh T."/>
            <person name="Hempel S."/>
            <person name="Kotter P."/>
            <person name="Entian K.-D."/>
            <person name="Rieger M."/>
            <person name="Schaefer M."/>
            <person name="Funk B."/>
            <person name="Mueller-Auer S."/>
            <person name="Silvey M."/>
            <person name="James R."/>
            <person name="Monfort A."/>
            <person name="Pons A."/>
            <person name="Puigdomenech P."/>
            <person name="Douka A."/>
            <person name="Voukelatou E."/>
            <person name="Milioni D."/>
            <person name="Hatzopoulos P."/>
            <person name="Piravandi E."/>
            <person name="Obermaier B."/>
            <person name="Hilbert H."/>
            <person name="Duesterhoeft A."/>
            <person name="Moores T."/>
            <person name="Jones J.D.G."/>
            <person name="Eneva T."/>
            <person name="Palme K."/>
            <person name="Benes V."/>
            <person name="Rechmann S."/>
            <person name="Ansorge W."/>
            <person name="Cooke R."/>
            <person name="Berger C."/>
            <person name="Delseny M."/>
            <person name="Voet M."/>
            <person name="Volckaert G."/>
            <person name="Mewes H.-W."/>
            <person name="Klosterman S."/>
            <person name="Schueller C."/>
            <person name="Chalwatzis N."/>
        </authorList>
    </citation>
    <scope>NUCLEOTIDE SEQUENCE [LARGE SCALE GENOMIC DNA]</scope>
    <source>
        <strain>cv. Columbia</strain>
    </source>
</reference>
<reference key="2">
    <citation type="journal article" date="1999" name="Nature">
        <title>Sequence and analysis of chromosome 4 of the plant Arabidopsis thaliana.</title>
        <authorList>
            <person name="Mayer K.F.X."/>
            <person name="Schueller C."/>
            <person name="Wambutt R."/>
            <person name="Murphy G."/>
            <person name="Volckaert G."/>
            <person name="Pohl T."/>
            <person name="Duesterhoeft A."/>
            <person name="Stiekema W."/>
            <person name="Entian K.-D."/>
            <person name="Terryn N."/>
            <person name="Harris B."/>
            <person name="Ansorge W."/>
            <person name="Brandt P."/>
            <person name="Grivell L.A."/>
            <person name="Rieger M."/>
            <person name="Weichselgartner M."/>
            <person name="de Simone V."/>
            <person name="Obermaier B."/>
            <person name="Mache R."/>
            <person name="Mueller M."/>
            <person name="Kreis M."/>
            <person name="Delseny M."/>
            <person name="Puigdomenech P."/>
            <person name="Watson M."/>
            <person name="Schmidtheini T."/>
            <person name="Reichert B."/>
            <person name="Portetelle D."/>
            <person name="Perez-Alonso M."/>
            <person name="Boutry M."/>
            <person name="Bancroft I."/>
            <person name="Vos P."/>
            <person name="Hoheisel J."/>
            <person name="Zimmermann W."/>
            <person name="Wedler H."/>
            <person name="Ridley P."/>
            <person name="Langham S.-A."/>
            <person name="McCullagh B."/>
            <person name="Bilham L."/>
            <person name="Robben J."/>
            <person name="van der Schueren J."/>
            <person name="Grymonprez B."/>
            <person name="Chuang Y.-J."/>
            <person name="Vandenbussche F."/>
            <person name="Braeken M."/>
            <person name="Weltjens I."/>
            <person name="Voet M."/>
            <person name="Bastiaens I."/>
            <person name="Aert R."/>
            <person name="Defoor E."/>
            <person name="Weitzenegger T."/>
            <person name="Bothe G."/>
            <person name="Ramsperger U."/>
            <person name="Hilbert H."/>
            <person name="Braun M."/>
            <person name="Holzer E."/>
            <person name="Brandt A."/>
            <person name="Peters S."/>
            <person name="van Staveren M."/>
            <person name="Dirkse W."/>
            <person name="Mooijman P."/>
            <person name="Klein Lankhorst R."/>
            <person name="Rose M."/>
            <person name="Hauf J."/>
            <person name="Koetter P."/>
            <person name="Berneiser S."/>
            <person name="Hempel S."/>
            <person name="Feldpausch M."/>
            <person name="Lamberth S."/>
            <person name="Van den Daele H."/>
            <person name="De Keyser A."/>
            <person name="Buysshaert C."/>
            <person name="Gielen J."/>
            <person name="Villarroel R."/>
            <person name="De Clercq R."/>
            <person name="van Montagu M."/>
            <person name="Rogers J."/>
            <person name="Cronin A."/>
            <person name="Quail M.A."/>
            <person name="Bray-Allen S."/>
            <person name="Clark L."/>
            <person name="Doggett J."/>
            <person name="Hall S."/>
            <person name="Kay M."/>
            <person name="Lennard N."/>
            <person name="McLay K."/>
            <person name="Mayes R."/>
            <person name="Pettett A."/>
            <person name="Rajandream M.A."/>
            <person name="Lyne M."/>
            <person name="Benes V."/>
            <person name="Rechmann S."/>
            <person name="Borkova D."/>
            <person name="Bloecker H."/>
            <person name="Scharfe M."/>
            <person name="Grimm M."/>
            <person name="Loehnert T.-H."/>
            <person name="Dose S."/>
            <person name="de Haan M."/>
            <person name="Maarse A.C."/>
            <person name="Schaefer M."/>
            <person name="Mueller-Auer S."/>
            <person name="Gabel C."/>
            <person name="Fuchs M."/>
            <person name="Fartmann B."/>
            <person name="Granderath K."/>
            <person name="Dauner D."/>
            <person name="Herzl A."/>
            <person name="Neumann S."/>
            <person name="Argiriou A."/>
            <person name="Vitale D."/>
            <person name="Liguori R."/>
            <person name="Piravandi E."/>
            <person name="Massenet O."/>
            <person name="Quigley F."/>
            <person name="Clabauld G."/>
            <person name="Muendlein A."/>
            <person name="Felber R."/>
            <person name="Schnabl S."/>
            <person name="Hiller R."/>
            <person name="Schmidt W."/>
            <person name="Lecharny A."/>
            <person name="Aubourg S."/>
            <person name="Chefdor F."/>
            <person name="Cooke R."/>
            <person name="Berger C."/>
            <person name="Monfort A."/>
            <person name="Casacuberta E."/>
            <person name="Gibbons T."/>
            <person name="Weber N."/>
            <person name="Vandenbol M."/>
            <person name="Bargues M."/>
            <person name="Terol J."/>
            <person name="Torres A."/>
            <person name="Perez-Perez A."/>
            <person name="Purnelle B."/>
            <person name="Bent E."/>
            <person name="Johnson S."/>
            <person name="Tacon D."/>
            <person name="Jesse T."/>
            <person name="Heijnen L."/>
            <person name="Schwarz S."/>
            <person name="Scholler P."/>
            <person name="Heber S."/>
            <person name="Francs P."/>
            <person name="Bielke C."/>
            <person name="Frishman D."/>
            <person name="Haase D."/>
            <person name="Lemcke K."/>
            <person name="Mewes H.-W."/>
            <person name="Stocker S."/>
            <person name="Zaccaria P."/>
            <person name="Bevan M."/>
            <person name="Wilson R.K."/>
            <person name="de la Bastide M."/>
            <person name="Habermann K."/>
            <person name="Parnell L."/>
            <person name="Dedhia N."/>
            <person name="Gnoj L."/>
            <person name="Schutz K."/>
            <person name="Huang E."/>
            <person name="Spiegel L."/>
            <person name="Sekhon M."/>
            <person name="Murray J."/>
            <person name="Sheet P."/>
            <person name="Cordes M."/>
            <person name="Abu-Threideh J."/>
            <person name="Stoneking T."/>
            <person name="Kalicki J."/>
            <person name="Graves T."/>
            <person name="Harmon G."/>
            <person name="Edwards J."/>
            <person name="Latreille P."/>
            <person name="Courtney L."/>
            <person name="Cloud J."/>
            <person name="Abbott A."/>
            <person name="Scott K."/>
            <person name="Johnson D."/>
            <person name="Minx P."/>
            <person name="Bentley D."/>
            <person name="Fulton B."/>
            <person name="Miller N."/>
            <person name="Greco T."/>
            <person name="Kemp K."/>
            <person name="Kramer J."/>
            <person name="Fulton L."/>
            <person name="Mardis E."/>
            <person name="Dante M."/>
            <person name="Pepin K."/>
            <person name="Hillier L.W."/>
            <person name="Nelson J."/>
            <person name="Spieth J."/>
            <person name="Ryan E."/>
            <person name="Andrews S."/>
            <person name="Geisel C."/>
            <person name="Layman D."/>
            <person name="Du H."/>
            <person name="Ali J."/>
            <person name="Berghoff A."/>
            <person name="Jones K."/>
            <person name="Drone K."/>
            <person name="Cotton M."/>
            <person name="Joshu C."/>
            <person name="Antonoiu B."/>
            <person name="Zidanic M."/>
            <person name="Strong C."/>
            <person name="Sun H."/>
            <person name="Lamar B."/>
            <person name="Yordan C."/>
            <person name="Ma P."/>
            <person name="Zhong J."/>
            <person name="Preston R."/>
            <person name="Vil D."/>
            <person name="Shekher M."/>
            <person name="Matero A."/>
            <person name="Shah R."/>
            <person name="Swaby I.K."/>
            <person name="O'Shaughnessy A."/>
            <person name="Rodriguez M."/>
            <person name="Hoffman J."/>
            <person name="Till S."/>
            <person name="Granat S."/>
            <person name="Shohdy N."/>
            <person name="Hasegawa A."/>
            <person name="Hameed A."/>
            <person name="Lodhi M."/>
            <person name="Johnson A."/>
            <person name="Chen E."/>
            <person name="Marra M.A."/>
            <person name="Martienssen R."/>
            <person name="McCombie W.R."/>
        </authorList>
    </citation>
    <scope>NUCLEOTIDE SEQUENCE [LARGE SCALE GENOMIC DNA]</scope>
    <source>
        <strain>cv. Columbia</strain>
    </source>
</reference>
<reference key="3">
    <citation type="journal article" date="2017" name="Plant J.">
        <title>Araport11: a complete reannotation of the Arabidopsis thaliana reference genome.</title>
        <authorList>
            <person name="Cheng C.Y."/>
            <person name="Krishnakumar V."/>
            <person name="Chan A.P."/>
            <person name="Thibaud-Nissen F."/>
            <person name="Schobel S."/>
            <person name="Town C.D."/>
        </authorList>
    </citation>
    <scope>GENOME REANNOTATION</scope>
    <source>
        <strain>cv. Columbia</strain>
    </source>
</reference>
<reference key="4">
    <citation type="journal article" date="2000" name="Plant Mol. Biol.">
        <title>In Arabidopsis thaliana, 1% of the genome codes for a novel protein family unique to plants.</title>
        <authorList>
            <person name="Aubourg S."/>
            <person name="Boudet N."/>
            <person name="Kreis M."/>
            <person name="Lecharny A."/>
        </authorList>
    </citation>
    <scope>GENE FAMILY</scope>
</reference>
<reference key="5">
    <citation type="journal article" date="2004" name="Plant Cell">
        <title>Genome-wide analysis of Arabidopsis pentatricopeptide repeat proteins reveals their essential role in organelle biogenesis.</title>
        <authorList>
            <person name="Lurin C."/>
            <person name="Andres C."/>
            <person name="Aubourg S."/>
            <person name="Bellaoui M."/>
            <person name="Bitton F."/>
            <person name="Bruyere C."/>
            <person name="Caboche M."/>
            <person name="Debast C."/>
            <person name="Gualberto J."/>
            <person name="Hoffmann B."/>
            <person name="Lecharny A."/>
            <person name="Le Ret M."/>
            <person name="Martin-Magniette M.-L."/>
            <person name="Mireau H."/>
            <person name="Peeters N."/>
            <person name="Renou J.-P."/>
            <person name="Szurek B."/>
            <person name="Taconnat L."/>
            <person name="Small I."/>
        </authorList>
    </citation>
    <scope>GENE FAMILY</scope>
</reference>
<feature type="chain" id="PRO_0000363429" description="Pentatricopeptide repeat-containing protein At4g14820">
    <location>
        <begin position="1"/>
        <end position="722"/>
    </location>
</feature>
<feature type="repeat" description="PPR 1">
    <location>
        <begin position="75"/>
        <end position="109"/>
    </location>
</feature>
<feature type="repeat" description="PPR 2">
    <location>
        <begin position="110"/>
        <end position="140"/>
    </location>
</feature>
<feature type="repeat" description="PPR 3">
    <location>
        <begin position="145"/>
        <end position="175"/>
    </location>
</feature>
<feature type="repeat" description="PPR 4">
    <location>
        <begin position="176"/>
        <end position="210"/>
    </location>
</feature>
<feature type="repeat" description="PPR 5">
    <location>
        <begin position="211"/>
        <end position="245"/>
    </location>
</feature>
<feature type="repeat" description="PPR 6">
    <location>
        <begin position="246"/>
        <end position="276"/>
    </location>
</feature>
<feature type="repeat" description="PPR 7">
    <location>
        <begin position="277"/>
        <end position="307"/>
    </location>
</feature>
<feature type="repeat" description="PPR 8">
    <location>
        <begin position="308"/>
        <end position="342"/>
    </location>
</feature>
<feature type="repeat" description="PPR 9">
    <location>
        <begin position="343"/>
        <end position="377"/>
    </location>
</feature>
<feature type="repeat" description="PPR 10">
    <location>
        <begin position="378"/>
        <end position="408"/>
    </location>
</feature>
<feature type="repeat" description="PPR 11">
    <location>
        <begin position="409"/>
        <end position="443"/>
    </location>
</feature>
<feature type="repeat" description="PPR 12">
    <location>
        <begin position="444"/>
        <end position="479"/>
    </location>
</feature>
<feature type="repeat" description="PPR 13">
    <location>
        <begin position="480"/>
        <end position="514"/>
    </location>
</feature>
<feature type="region of interest" description="Type E motif">
    <location>
        <begin position="515"/>
        <end position="590"/>
    </location>
</feature>
<feature type="region of interest" description="Type E(+) motif">
    <location>
        <begin position="591"/>
        <end position="621"/>
    </location>
</feature>
<feature type="region of interest" description="Type DYW motif">
    <location>
        <begin position="622"/>
        <end position="722"/>
    </location>
</feature>
<sequence length="722" mass="82113">MTLPPPIASTAANTILEKLSFCKSLNHIKQLHAHILRTVINHKLNSFLFNLSVSSSSINLSYALNVFSSIPSPPESIVFNPFLRDLSRSSEPRATILFYQRIRHVGGRLDQFSFLPILKAVSKVSALFEGMELHGVAFKIATLCDPFVETGFMDMYASCGRINYARNVFDEMSHRDVVTWNTMIERYCRFGLVDEAFKLFEEMKDSNVMPDEMILCNIVSACGRTGNMRYNRAIYEFLIENDVRMDTHLLTALVTMYAGAGCMDMAREFFRKMSVRNLFVSTAMVSGYSKCGRLDDAQVIFDQTEKKDLVCWTTMISAYVESDYPQEALRVFEEMCCSGIKPDVVSMFSVISACANLGILDKAKWVHSCIHVNGLESELSINNALINMYAKCGGLDATRDVFEKMPRRNVVSWSSMINALSMHGEASDALSLFARMKQENVEPNEVTFVGVLYGCSHSGLVEEGKKIFASMTDEYNITPKLEHYGCMVDLFGRANLLREALEVIESMPVASNVVIWGSLMSACRIHGELELGKFAAKRILELEPDHDGALVLMSNIYAREQRWEDVRNIRRVMEEKNVFKEKGLSRIDQNGKSHEFLIGDKRHKQSNEIYAKLDEVVSKLKLAGYVPDCGSVLVDVEEEEKKDLVLWHSEKLALCFGLMNEEKEEEKDSCGVIRIVKNLRVCEDCHLFFKLVSKVYEREIIVRDRTRFHCYKNGLCSCRDYW</sequence>
<protein>
    <recommendedName>
        <fullName>Pentatricopeptide repeat-containing protein At4g14820</fullName>
    </recommendedName>
</protein>
<organism>
    <name type="scientific">Arabidopsis thaliana</name>
    <name type="common">Mouse-ear cress</name>
    <dbReference type="NCBI Taxonomy" id="3702"/>
    <lineage>
        <taxon>Eukaryota</taxon>
        <taxon>Viridiplantae</taxon>
        <taxon>Streptophyta</taxon>
        <taxon>Embryophyta</taxon>
        <taxon>Tracheophyta</taxon>
        <taxon>Spermatophyta</taxon>
        <taxon>Magnoliopsida</taxon>
        <taxon>eudicotyledons</taxon>
        <taxon>Gunneridae</taxon>
        <taxon>Pentapetalae</taxon>
        <taxon>rosids</taxon>
        <taxon>malvids</taxon>
        <taxon>Brassicales</taxon>
        <taxon>Brassicaceae</taxon>
        <taxon>Camelineae</taxon>
        <taxon>Arabidopsis</taxon>
    </lineage>
</organism>
<dbReference type="EMBL" id="Z97337">
    <property type="protein sequence ID" value="CAB10261.1"/>
    <property type="molecule type" value="Genomic_DNA"/>
</dbReference>
<dbReference type="EMBL" id="AL161540">
    <property type="protein sequence ID" value="CAB78524.1"/>
    <property type="molecule type" value="Genomic_DNA"/>
</dbReference>
<dbReference type="EMBL" id="CP002687">
    <property type="protein sequence ID" value="AEE83506.1"/>
    <property type="molecule type" value="Genomic_DNA"/>
</dbReference>
<dbReference type="PIR" id="C71411">
    <property type="entry name" value="C71411"/>
</dbReference>
<dbReference type="RefSeq" id="NP_193218.1">
    <property type="nucleotide sequence ID" value="NM_117568.2"/>
</dbReference>
<dbReference type="SMR" id="O23337"/>
<dbReference type="FunCoup" id="O23337">
    <property type="interactions" value="7"/>
</dbReference>
<dbReference type="PaxDb" id="3702-AT4G14820.1"/>
<dbReference type="ProteomicsDB" id="249220"/>
<dbReference type="EnsemblPlants" id="AT4G14820.1">
    <property type="protein sequence ID" value="AT4G14820.1"/>
    <property type="gene ID" value="AT4G14820"/>
</dbReference>
<dbReference type="GeneID" id="827139"/>
<dbReference type="Gramene" id="AT4G14820.1">
    <property type="protein sequence ID" value="AT4G14820.1"/>
    <property type="gene ID" value="AT4G14820"/>
</dbReference>
<dbReference type="KEGG" id="ath:AT4G14820"/>
<dbReference type="Araport" id="AT4G14820"/>
<dbReference type="TAIR" id="AT4G14820"/>
<dbReference type="eggNOG" id="KOG4197">
    <property type="taxonomic scope" value="Eukaryota"/>
</dbReference>
<dbReference type="HOGENOM" id="CLU_002706_37_2_1"/>
<dbReference type="InParanoid" id="O23337"/>
<dbReference type="OMA" id="HEFLMAD"/>
<dbReference type="PhylomeDB" id="O23337"/>
<dbReference type="PRO" id="PR:O23337"/>
<dbReference type="Proteomes" id="UP000006548">
    <property type="component" value="Chromosome 4"/>
</dbReference>
<dbReference type="ExpressionAtlas" id="O23337">
    <property type="expression patterns" value="baseline and differential"/>
</dbReference>
<dbReference type="GO" id="GO:0003723">
    <property type="term" value="F:RNA binding"/>
    <property type="evidence" value="ECO:0007669"/>
    <property type="project" value="InterPro"/>
</dbReference>
<dbReference type="GO" id="GO:0008270">
    <property type="term" value="F:zinc ion binding"/>
    <property type="evidence" value="ECO:0007669"/>
    <property type="project" value="InterPro"/>
</dbReference>
<dbReference type="GO" id="GO:0009451">
    <property type="term" value="P:RNA modification"/>
    <property type="evidence" value="ECO:0007669"/>
    <property type="project" value="InterPro"/>
</dbReference>
<dbReference type="FunFam" id="1.25.40.10:FF:000325">
    <property type="entry name" value="Pentatricopeptide repeat-containing protein At4g14820"/>
    <property type="match status" value="1"/>
</dbReference>
<dbReference type="FunFam" id="1.25.40.10:FF:000348">
    <property type="entry name" value="Pentatricopeptide repeat-containing protein chloroplastic"/>
    <property type="match status" value="1"/>
</dbReference>
<dbReference type="FunFam" id="1.25.40.10:FF:000427">
    <property type="entry name" value="Pentatricopeptide repeat-containing protein chloroplastic"/>
    <property type="match status" value="1"/>
</dbReference>
<dbReference type="Gene3D" id="1.25.40.10">
    <property type="entry name" value="Tetratricopeptide repeat domain"/>
    <property type="match status" value="3"/>
</dbReference>
<dbReference type="InterPro" id="IPR032867">
    <property type="entry name" value="DYW_dom"/>
</dbReference>
<dbReference type="InterPro" id="IPR046848">
    <property type="entry name" value="E_motif"/>
</dbReference>
<dbReference type="InterPro" id="IPR002885">
    <property type="entry name" value="Pentatricopeptide_rpt"/>
</dbReference>
<dbReference type="InterPro" id="IPR046960">
    <property type="entry name" value="PPR_At4g14850-like_plant"/>
</dbReference>
<dbReference type="InterPro" id="IPR011990">
    <property type="entry name" value="TPR-like_helical_dom_sf"/>
</dbReference>
<dbReference type="NCBIfam" id="TIGR00756">
    <property type="entry name" value="PPR"/>
    <property type="match status" value="3"/>
</dbReference>
<dbReference type="PANTHER" id="PTHR47926">
    <property type="entry name" value="PENTATRICOPEPTIDE REPEAT-CONTAINING PROTEIN"/>
    <property type="match status" value="1"/>
</dbReference>
<dbReference type="PANTHER" id="PTHR47926:SF347">
    <property type="entry name" value="PENTATRICOPEPTIDE REPEAT-CONTAINING PROTEIN"/>
    <property type="match status" value="1"/>
</dbReference>
<dbReference type="Pfam" id="PF14432">
    <property type="entry name" value="DYW_deaminase"/>
    <property type="match status" value="1"/>
</dbReference>
<dbReference type="Pfam" id="PF20431">
    <property type="entry name" value="E_motif"/>
    <property type="match status" value="1"/>
</dbReference>
<dbReference type="Pfam" id="PF01535">
    <property type="entry name" value="PPR"/>
    <property type="match status" value="3"/>
</dbReference>
<dbReference type="Pfam" id="PF13041">
    <property type="entry name" value="PPR_2"/>
    <property type="match status" value="3"/>
</dbReference>
<dbReference type="PROSITE" id="PS51375">
    <property type="entry name" value="PPR"/>
    <property type="match status" value="13"/>
</dbReference>
<evidence type="ECO:0000305" key="1"/>
<accession>O23337</accession>
<keyword id="KW-1185">Reference proteome</keyword>
<keyword id="KW-0677">Repeat</keyword>
<gene>
    <name type="primary">PCMP-H3</name>
    <name type="ordered locus">At4g14820</name>
    <name type="ORF">dl3135c</name>
    <name type="ORF">FCAALL.115</name>
</gene>
<name>PP311_ARATH</name>
<comment type="similarity">
    <text evidence="1">Belongs to the PPR family. PCMP-H subfamily.</text>
</comment>
<comment type="online information" name="Pentatricopeptide repeat proteins">
    <link uri="https://ppr.plantenergy.uwa.edu.au"/>
</comment>